<feature type="chain" id="PRO_0000366387" description="Protein clueless">
    <location>
        <begin position="1"/>
        <end position="1441"/>
    </location>
</feature>
<feature type="domain" description="Clu" evidence="3">
    <location>
        <begin position="427"/>
        <end position="669"/>
    </location>
</feature>
<feature type="repeat" description="TPR 1">
    <location>
        <begin position="1109"/>
        <end position="1142"/>
    </location>
</feature>
<feature type="repeat" description="TPR 2">
    <location>
        <begin position="1235"/>
        <end position="1268"/>
    </location>
</feature>
<feature type="repeat" description="TPR 3">
    <location>
        <begin position="1270"/>
        <end position="1303"/>
    </location>
</feature>
<feature type="region of interest" description="Disordered" evidence="4">
    <location>
        <begin position="1"/>
        <end position="79"/>
    </location>
</feature>
<feature type="region of interest" description="Disordered" evidence="4">
    <location>
        <begin position="106"/>
        <end position="131"/>
    </location>
</feature>
<feature type="region of interest" description="Disordered" evidence="4">
    <location>
        <begin position="726"/>
        <end position="769"/>
    </location>
</feature>
<feature type="region of interest" description="Disordered" evidence="4">
    <location>
        <begin position="961"/>
        <end position="1009"/>
    </location>
</feature>
<feature type="compositionally biased region" description="Polar residues" evidence="4">
    <location>
        <begin position="8"/>
        <end position="22"/>
    </location>
</feature>
<feature type="compositionally biased region" description="Basic residues" evidence="4">
    <location>
        <begin position="54"/>
        <end position="63"/>
    </location>
</feature>
<feature type="compositionally biased region" description="Low complexity" evidence="4">
    <location>
        <begin position="64"/>
        <end position="79"/>
    </location>
</feature>
<feature type="compositionally biased region" description="Low complexity" evidence="4">
    <location>
        <begin position="106"/>
        <end position="126"/>
    </location>
</feature>
<feature type="compositionally biased region" description="Basic and acidic residues" evidence="4">
    <location>
        <begin position="726"/>
        <end position="753"/>
    </location>
</feature>
<feature type="compositionally biased region" description="Basic residues" evidence="4">
    <location>
        <begin position="964"/>
        <end position="977"/>
    </location>
</feature>
<feature type="compositionally biased region" description="Low complexity" evidence="4">
    <location>
        <begin position="978"/>
        <end position="1009"/>
    </location>
</feature>
<feature type="modified residue" description="Phosphoserine" evidence="1">
    <location>
        <position position="273"/>
    </location>
</feature>
<comment type="function">
    <text evidence="2">mRNA-binding protein involved in proper cytoplasmic distribution of mitochondria.</text>
</comment>
<comment type="subcellular location">
    <subcellularLocation>
        <location evidence="2">Cytoplasm</location>
    </subcellularLocation>
</comment>
<comment type="similarity">
    <text evidence="2">Belongs to the CLU family.</text>
</comment>
<evidence type="ECO:0000250" key="1"/>
<evidence type="ECO:0000255" key="2">
    <source>
        <dbReference type="HAMAP-Rule" id="MF_03013"/>
    </source>
</evidence>
<evidence type="ECO:0000255" key="3">
    <source>
        <dbReference type="PROSITE-ProRule" id="PRU01167"/>
    </source>
</evidence>
<evidence type="ECO:0000256" key="4">
    <source>
        <dbReference type="SAM" id="MobiDB-lite"/>
    </source>
</evidence>
<sequence length="1441" mass="160067">MALDIDTKNSSSAATGDANTVKANNNSSAASTGNKKTENLVNGNNNSAADGPAAKKKGKKNRNKSPPIATDAETTEAATTTAVTNGHEGEALVNGDAVAPDANANVAANDESESAEQQAAENAASSGELESEDVDLDALHDVGITVNISSPGADIISVQLSSMELVQEIHQLLMDREETCHRTCFSLQLGNNTLDNFAELKTVENLEQGSTIKVVEDPYTMREARIHVRHVRDLLKNLDPTDAYNGIDCTSLTYLNTITQGDLLDKKKTRPDSVDCTPPEYVTPGVKEPPLLPLHPNIKNAKGPQALKVLTTSAWNPPPGPRKLHGDLMYLYVVTMEEKRFHISACSKGFFINQSTDENFNPKPDNPSHLSHSLIDLLSTISPIFRRAFQTIQKRRTLRHAFERVATPYQVYQWASPQLEHTVDAIRAEDAFSSKLGYEEHIPGQTRDWNEELQTTRELPRKTLPERLMRERAIFKVHGDFVTAATRGAMAVIDGNVLAINPGEDSKMQMFIWNNIFFSLGFDVRDHYKELGGDHAAFVAPRYDLHGVRVYNAVDVEGLYTLGTVVIDYRGYRVTAQSIIPGILEREQEQSVVYGSIDFGKTVLSHPKYLELLRQAGKHLKILPHSVLNERDEPVELCSSVECKGIIGNDGRHYILDLLRTFPPDVNFLKLQDVKLSKELTEMGFPIEHRHKLCCLRQELLEAFIEDRYVSFIRIAAVHLQQLNAKKQDEAKEGTKEPASETEKESPPKAITEKEEEESKDQPTVGETKSAEAMVNAIREAQSNMATSNEVQAAEVVKRACAAVGSLKEKEFDFRFNPDVFSPGIRHVDGEEGTSSSIVKQKRLVQDAAEFLVLKQIPTFIKEHLAHSSPPIDGQTLTESLHNNGINVRYLGKVIKMLSQMPRMEYLYRIANLELIVRATKHIYYTYMQGTEPLHLSAAISHFLNCLLTNGPVNPAISKEEIHKKRTNTKYNKHKSSKSSGSGSKQSGQTSNQNGTSTSPSSSTASGGTSSNVAIDWTLVTPRSLWQQIRKEAKAYWDWDLECDAIDIALTKYGISRISLLRGFCQKVGIQVLLREYNFESKHKPTFGDDDIVNVFPVVKHISPRSTDAYNFYTTGQSKIQQGLFKEGYELISEALNLLNNVFGAMHQENGSCLRMLARLSYLLGDAQDALAIQQRAVIMSERVNGIDHPSTILEYTHLSLYSFANGHVGMSLKLLYRARYLLVLICGEDHPEVALIDSNISLILHALGEYELSLRFIEHALKLNLKYFGAKAMHVAVSYHLMARTQSCMGDFRSALNNEKETYTIYKSQLGEKHEKTRDSAECLRLLTQQAVLLQRKMNDIYSNGKLTSDLPPIHITPPSMGSVLDMLNTINGILFVQISQNDIVKVRSEIEKHLKANGEESEVNDAIKSIVDASGNNNGETEALINGGEESTVTVTATS</sequence>
<proteinExistence type="inferred from homology"/>
<name>CLU_DROWI</name>
<organism>
    <name type="scientific">Drosophila willistoni</name>
    <name type="common">Fruit fly</name>
    <dbReference type="NCBI Taxonomy" id="7260"/>
    <lineage>
        <taxon>Eukaryota</taxon>
        <taxon>Metazoa</taxon>
        <taxon>Ecdysozoa</taxon>
        <taxon>Arthropoda</taxon>
        <taxon>Hexapoda</taxon>
        <taxon>Insecta</taxon>
        <taxon>Pterygota</taxon>
        <taxon>Neoptera</taxon>
        <taxon>Endopterygota</taxon>
        <taxon>Diptera</taxon>
        <taxon>Brachycera</taxon>
        <taxon>Muscomorpha</taxon>
        <taxon>Ephydroidea</taxon>
        <taxon>Drosophilidae</taxon>
        <taxon>Drosophila</taxon>
        <taxon>Sophophora</taxon>
    </lineage>
</organism>
<accession>B4MY63</accession>
<gene>
    <name evidence="2" type="primary">clu</name>
    <name type="ORF">GK22132</name>
</gene>
<dbReference type="EMBL" id="CH963894">
    <property type="protein sequence ID" value="EDW77052.1"/>
    <property type="molecule type" value="Genomic_DNA"/>
</dbReference>
<dbReference type="SMR" id="B4MY63"/>
<dbReference type="STRING" id="7260.B4MY63"/>
<dbReference type="EnsemblMetazoa" id="FBtr0252783">
    <property type="protein sequence ID" value="FBpp0251275"/>
    <property type="gene ID" value="FBgn0224117"/>
</dbReference>
<dbReference type="EnsemblMetazoa" id="XM_002066030.4">
    <property type="protein sequence ID" value="XP_002066066.1"/>
    <property type="gene ID" value="LOC6643348"/>
</dbReference>
<dbReference type="GeneID" id="6643348"/>
<dbReference type="KEGG" id="dwi:6643348"/>
<dbReference type="CTD" id="1191"/>
<dbReference type="eggNOG" id="KOG1839">
    <property type="taxonomic scope" value="Eukaryota"/>
</dbReference>
<dbReference type="HOGENOM" id="CLU_003256_1_0_1"/>
<dbReference type="OMA" id="HPVWDKD"/>
<dbReference type="OrthoDB" id="1414216at2759"/>
<dbReference type="PhylomeDB" id="B4MY63"/>
<dbReference type="Proteomes" id="UP000007798">
    <property type="component" value="Unassembled WGS sequence"/>
</dbReference>
<dbReference type="GO" id="GO:0005829">
    <property type="term" value="C:cytosol"/>
    <property type="evidence" value="ECO:0007669"/>
    <property type="project" value="EnsemblMetazoa"/>
</dbReference>
<dbReference type="GO" id="GO:0003729">
    <property type="term" value="F:mRNA binding"/>
    <property type="evidence" value="ECO:0007669"/>
    <property type="project" value="EnsemblMetazoa"/>
</dbReference>
<dbReference type="GO" id="GO:0043022">
    <property type="term" value="F:ribosome binding"/>
    <property type="evidence" value="ECO:0007669"/>
    <property type="project" value="EnsemblMetazoa"/>
</dbReference>
<dbReference type="GO" id="GO:0055059">
    <property type="term" value="P:asymmetric neuroblast division"/>
    <property type="evidence" value="ECO:0007669"/>
    <property type="project" value="EnsemblMetazoa"/>
</dbReference>
<dbReference type="GO" id="GO:0048312">
    <property type="term" value="P:intracellular distribution of mitochondria"/>
    <property type="evidence" value="ECO:0007669"/>
    <property type="project" value="TreeGrafter"/>
</dbReference>
<dbReference type="GO" id="GO:0007005">
    <property type="term" value="P:mitochondrion organization"/>
    <property type="evidence" value="ECO:0007669"/>
    <property type="project" value="UniProtKB-UniRule"/>
</dbReference>
<dbReference type="GO" id="GO:0033750">
    <property type="term" value="P:ribosome localization"/>
    <property type="evidence" value="ECO:0007669"/>
    <property type="project" value="EnsemblMetazoa"/>
</dbReference>
<dbReference type="CDD" id="cd15466">
    <property type="entry name" value="CLU-central"/>
    <property type="match status" value="1"/>
</dbReference>
<dbReference type="FunFam" id="1.25.40.10:FF:000099">
    <property type="entry name" value="Clustered mitochondria protein homolog"/>
    <property type="match status" value="1"/>
</dbReference>
<dbReference type="FunFam" id="3.30.2280.10:FF:000002">
    <property type="entry name" value="Clustered mitochondria protein homolog"/>
    <property type="match status" value="1"/>
</dbReference>
<dbReference type="Gene3D" id="3.30.2280.10">
    <property type="entry name" value="Hypothetical protein (hspc210)"/>
    <property type="match status" value="1"/>
</dbReference>
<dbReference type="Gene3D" id="1.25.40.10">
    <property type="entry name" value="Tetratricopeptide repeat domain"/>
    <property type="match status" value="2"/>
</dbReference>
<dbReference type="HAMAP" id="MF_03013">
    <property type="entry name" value="CLU"/>
    <property type="match status" value="1"/>
</dbReference>
<dbReference type="InterPro" id="IPR033646">
    <property type="entry name" value="CLU-central"/>
</dbReference>
<dbReference type="InterPro" id="IPR025697">
    <property type="entry name" value="CLU_dom"/>
</dbReference>
<dbReference type="InterPro" id="IPR028275">
    <property type="entry name" value="CLU_N"/>
</dbReference>
<dbReference type="InterPro" id="IPR027523">
    <property type="entry name" value="CLU_prot"/>
</dbReference>
<dbReference type="InterPro" id="IPR007967">
    <property type="entry name" value="GSKIP_dom"/>
</dbReference>
<dbReference type="InterPro" id="IPR023231">
    <property type="entry name" value="GSKIP_dom_sf"/>
</dbReference>
<dbReference type="InterPro" id="IPR011990">
    <property type="entry name" value="TPR-like_helical_dom_sf"/>
</dbReference>
<dbReference type="PANTHER" id="PTHR12601:SF6">
    <property type="entry name" value="CLUSTERED MITOCHONDRIA PROTEIN HOMOLOG"/>
    <property type="match status" value="1"/>
</dbReference>
<dbReference type="PANTHER" id="PTHR12601">
    <property type="entry name" value="EUKARYOTIC TRANSLATION INITIATION FACTOR 3 SUBUNIT EIF-3"/>
    <property type="match status" value="1"/>
</dbReference>
<dbReference type="Pfam" id="PF13236">
    <property type="entry name" value="CLU"/>
    <property type="match status" value="1"/>
</dbReference>
<dbReference type="Pfam" id="PF15044">
    <property type="entry name" value="CLU_N"/>
    <property type="match status" value="1"/>
</dbReference>
<dbReference type="Pfam" id="PF12807">
    <property type="entry name" value="eIF3_p135"/>
    <property type="match status" value="1"/>
</dbReference>
<dbReference type="Pfam" id="PF05303">
    <property type="entry name" value="GSKIP_dom"/>
    <property type="match status" value="1"/>
</dbReference>
<dbReference type="Pfam" id="PF13374">
    <property type="entry name" value="TPR_10"/>
    <property type="match status" value="1"/>
</dbReference>
<dbReference type="Pfam" id="PF13424">
    <property type="entry name" value="TPR_12"/>
    <property type="match status" value="1"/>
</dbReference>
<dbReference type="SUPFAM" id="SSF103107">
    <property type="entry name" value="Hypothetical protein c14orf129, hspc210"/>
    <property type="match status" value="1"/>
</dbReference>
<dbReference type="SUPFAM" id="SSF48452">
    <property type="entry name" value="TPR-like"/>
    <property type="match status" value="2"/>
</dbReference>
<dbReference type="PROSITE" id="PS51823">
    <property type="entry name" value="CLU"/>
    <property type="match status" value="1"/>
</dbReference>
<keyword id="KW-0963">Cytoplasm</keyword>
<keyword id="KW-0597">Phosphoprotein</keyword>
<keyword id="KW-1185">Reference proteome</keyword>
<keyword id="KW-0677">Repeat</keyword>
<keyword id="KW-0802">TPR repeat</keyword>
<protein>
    <recommendedName>
        <fullName evidence="2">Protein clueless</fullName>
    </recommendedName>
    <alternativeName>
        <fullName evidence="2">Clustered mitochondria protein homolog</fullName>
    </alternativeName>
</protein>
<reference key="1">
    <citation type="journal article" date="2007" name="Nature">
        <title>Evolution of genes and genomes on the Drosophila phylogeny.</title>
        <authorList>
            <consortium name="Drosophila 12 genomes consortium"/>
        </authorList>
    </citation>
    <scope>NUCLEOTIDE SEQUENCE [LARGE SCALE GENOMIC DNA]</scope>
    <source>
        <strain>Tucson 14030-0811.24</strain>
    </source>
</reference>